<organism>
    <name type="scientific">Bacillus mycoides (strain KBAB4)</name>
    <name type="common">Bacillus weihenstephanensis</name>
    <dbReference type="NCBI Taxonomy" id="315730"/>
    <lineage>
        <taxon>Bacteria</taxon>
        <taxon>Bacillati</taxon>
        <taxon>Bacillota</taxon>
        <taxon>Bacilli</taxon>
        <taxon>Bacillales</taxon>
        <taxon>Bacillaceae</taxon>
        <taxon>Bacillus</taxon>
        <taxon>Bacillus cereus group</taxon>
    </lineage>
</organism>
<reference key="1">
    <citation type="journal article" date="2008" name="Chem. Biol. Interact.">
        <title>Extending the Bacillus cereus group genomics to putative food-borne pathogens of different toxicity.</title>
        <authorList>
            <person name="Lapidus A."/>
            <person name="Goltsman E."/>
            <person name="Auger S."/>
            <person name="Galleron N."/>
            <person name="Segurens B."/>
            <person name="Dossat C."/>
            <person name="Land M.L."/>
            <person name="Broussolle V."/>
            <person name="Brillard J."/>
            <person name="Guinebretiere M.-H."/>
            <person name="Sanchis V."/>
            <person name="Nguen-the C."/>
            <person name="Lereclus D."/>
            <person name="Richardson P."/>
            <person name="Wincker P."/>
            <person name="Weissenbach J."/>
            <person name="Ehrlich S.D."/>
            <person name="Sorokin A."/>
        </authorList>
    </citation>
    <scope>NUCLEOTIDE SEQUENCE [LARGE SCALE GENOMIC DNA]</scope>
    <source>
        <strain>KBAB4</strain>
    </source>
</reference>
<feature type="chain" id="PRO_1000122896" description="Large ribosomal subunit protein bL34">
    <location>
        <begin position="1"/>
        <end position="44"/>
    </location>
</feature>
<feature type="region of interest" description="Disordered" evidence="2">
    <location>
        <begin position="1"/>
        <end position="44"/>
    </location>
</feature>
<feature type="compositionally biased region" description="Basic residues" evidence="2">
    <location>
        <begin position="1"/>
        <end position="19"/>
    </location>
</feature>
<feature type="compositionally biased region" description="Basic residues" evidence="2">
    <location>
        <begin position="31"/>
        <end position="44"/>
    </location>
</feature>
<protein>
    <recommendedName>
        <fullName evidence="1">Large ribosomal subunit protein bL34</fullName>
    </recommendedName>
    <alternativeName>
        <fullName evidence="3">50S ribosomal protein L34</fullName>
    </alternativeName>
</protein>
<sequence>MKRTYQPNKRKRSKVHGFRSRMSTANGRKVLAARRRKGRKVLSA</sequence>
<name>RL34_BACMK</name>
<comment type="similarity">
    <text evidence="1">Belongs to the bacterial ribosomal protein bL34 family.</text>
</comment>
<gene>
    <name evidence="1" type="primary">rpmH</name>
    <name type="ordered locus">BcerKBAB4_5281</name>
</gene>
<keyword id="KW-0687">Ribonucleoprotein</keyword>
<keyword id="KW-0689">Ribosomal protein</keyword>
<dbReference type="EMBL" id="CP000903">
    <property type="protein sequence ID" value="ABY46424.1"/>
    <property type="molecule type" value="Genomic_DNA"/>
</dbReference>
<dbReference type="RefSeq" id="WP_000831901.1">
    <property type="nucleotide sequence ID" value="NC_010184.1"/>
</dbReference>
<dbReference type="SMR" id="A9VTM4"/>
<dbReference type="GeneID" id="93005634"/>
<dbReference type="KEGG" id="bwe:BcerKBAB4_5281"/>
<dbReference type="eggNOG" id="COG0230">
    <property type="taxonomic scope" value="Bacteria"/>
</dbReference>
<dbReference type="HOGENOM" id="CLU_129938_2_0_9"/>
<dbReference type="Proteomes" id="UP000002154">
    <property type="component" value="Chromosome"/>
</dbReference>
<dbReference type="GO" id="GO:1990904">
    <property type="term" value="C:ribonucleoprotein complex"/>
    <property type="evidence" value="ECO:0007669"/>
    <property type="project" value="UniProtKB-KW"/>
</dbReference>
<dbReference type="GO" id="GO:0005840">
    <property type="term" value="C:ribosome"/>
    <property type="evidence" value="ECO:0007669"/>
    <property type="project" value="UniProtKB-KW"/>
</dbReference>
<dbReference type="GO" id="GO:0003735">
    <property type="term" value="F:structural constituent of ribosome"/>
    <property type="evidence" value="ECO:0007669"/>
    <property type="project" value="InterPro"/>
</dbReference>
<dbReference type="GO" id="GO:0006412">
    <property type="term" value="P:translation"/>
    <property type="evidence" value="ECO:0007669"/>
    <property type="project" value="UniProtKB-UniRule"/>
</dbReference>
<dbReference type="FunFam" id="1.10.287.3980:FF:000001">
    <property type="entry name" value="Mitochondrial ribosomal protein L34"/>
    <property type="match status" value="1"/>
</dbReference>
<dbReference type="Gene3D" id="1.10.287.3980">
    <property type="match status" value="1"/>
</dbReference>
<dbReference type="HAMAP" id="MF_00391">
    <property type="entry name" value="Ribosomal_bL34"/>
    <property type="match status" value="1"/>
</dbReference>
<dbReference type="InterPro" id="IPR000271">
    <property type="entry name" value="Ribosomal_bL34"/>
</dbReference>
<dbReference type="InterPro" id="IPR020939">
    <property type="entry name" value="Ribosomal_bL34_CS"/>
</dbReference>
<dbReference type="NCBIfam" id="TIGR01030">
    <property type="entry name" value="rpmH_bact"/>
    <property type="match status" value="1"/>
</dbReference>
<dbReference type="PANTHER" id="PTHR14503:SF4">
    <property type="entry name" value="LARGE RIBOSOMAL SUBUNIT PROTEIN BL34M"/>
    <property type="match status" value="1"/>
</dbReference>
<dbReference type="PANTHER" id="PTHR14503">
    <property type="entry name" value="MITOCHONDRIAL RIBOSOMAL PROTEIN 34 FAMILY MEMBER"/>
    <property type="match status" value="1"/>
</dbReference>
<dbReference type="Pfam" id="PF00468">
    <property type="entry name" value="Ribosomal_L34"/>
    <property type="match status" value="1"/>
</dbReference>
<dbReference type="PROSITE" id="PS00784">
    <property type="entry name" value="RIBOSOMAL_L34"/>
    <property type="match status" value="1"/>
</dbReference>
<accession>A9VTM4</accession>
<proteinExistence type="inferred from homology"/>
<evidence type="ECO:0000255" key="1">
    <source>
        <dbReference type="HAMAP-Rule" id="MF_00391"/>
    </source>
</evidence>
<evidence type="ECO:0000256" key="2">
    <source>
        <dbReference type="SAM" id="MobiDB-lite"/>
    </source>
</evidence>
<evidence type="ECO:0000305" key="3"/>